<protein>
    <recommendedName>
        <fullName>Probable periplasmic serine endoprotease DegP-like</fullName>
        <ecNumber>3.4.21.107</ecNumber>
    </recommendedName>
    <alternativeName>
        <fullName>Protease Do</fullName>
    </alternativeName>
</protein>
<proteinExistence type="inferred from homology"/>
<evidence type="ECO:0000250" key="1"/>
<evidence type="ECO:0000255" key="2"/>
<evidence type="ECO:0000255" key="3">
    <source>
        <dbReference type="PROSITE-ProRule" id="PRU00143"/>
    </source>
</evidence>
<evidence type="ECO:0000256" key="4">
    <source>
        <dbReference type="SAM" id="MobiDB-lite"/>
    </source>
</evidence>
<evidence type="ECO:0000305" key="5"/>
<comment type="function">
    <text evidence="1">Might be efficient in the degradation of transiently denatured and unfolded proteins which accumulate in the periplasm following stress conditions.</text>
</comment>
<comment type="catalytic activity">
    <reaction>
        <text>Acts on substrates that are at least partially unfolded. The cleavage site P1 residue is normally between a pair of hydrophobic residues, such as Val-|-Val.</text>
        <dbReference type="EC" id="3.4.21.107"/>
    </reaction>
</comment>
<comment type="subcellular location">
    <subcellularLocation>
        <location evidence="5">Periplasm</location>
    </subcellularLocation>
</comment>
<comment type="similarity">
    <text evidence="5">Belongs to the peptidase S1C family.</text>
</comment>
<gene>
    <name type="ordered locus">PputW619_1070</name>
</gene>
<name>DEGPL_PSEPW</name>
<keyword id="KW-0378">Hydrolase</keyword>
<keyword id="KW-0574">Periplasm</keyword>
<keyword id="KW-0645">Protease</keyword>
<keyword id="KW-0677">Repeat</keyword>
<keyword id="KW-0720">Serine protease</keyword>
<keyword id="KW-0732">Signal</keyword>
<keyword id="KW-0346">Stress response</keyword>
<sequence>MSIPRLKSYLSMFAAVLMLGQVLSAQAEEALPDFTTLVEQASPAVVNISTKQKLPDRRIAAGQMPDLEGLPPMFREFFERNMPQQPRSPRGDRQREAQSLGSGFIISSDGYVLTNNHVVADADEIIVRLSDRSELQAKLVGTDPRTDVALLKVDGKNLPTVKLGDSEKLKVGEWVLAIGSPFGFDHSVTKGIVSAKGRTLPNDTYVPFIQTDVAINPGNSGGPLFNMNGEVVGINSQIFTRSGGFMGLSFAIPIDVAIDVSNQLKKDGKVSRGWLGVVIQEVNKDLAESFGLDKPAGALVAQVLEDGPAAKSGLQVGDVILSMNGQPIVMSADLPHLVGTLKAGAKAKLEIIRNGKRQNLDVTIGAMPDDDADIGTGTGADGSAERSSNRLGVSVSDLTAEQKKSLELKGGVVIKEVQDGPAAMIGLRPGDVISHLNNQAIASAKQFTEIAKDLPKNRSVSMRVLRQGRASFITFKLAE</sequence>
<dbReference type="EC" id="3.4.21.107"/>
<dbReference type="EMBL" id="CP000949">
    <property type="protein sequence ID" value="ACA71575.1"/>
    <property type="molecule type" value="Genomic_DNA"/>
</dbReference>
<dbReference type="SMR" id="B1J4D7"/>
<dbReference type="STRING" id="390235.PputW619_1070"/>
<dbReference type="MEROPS" id="S01.453"/>
<dbReference type="KEGG" id="ppw:PputW619_1070"/>
<dbReference type="eggNOG" id="COG0265">
    <property type="taxonomic scope" value="Bacteria"/>
</dbReference>
<dbReference type="HOGENOM" id="CLU_020120_1_0_6"/>
<dbReference type="OrthoDB" id="9758917at2"/>
<dbReference type="GO" id="GO:0042597">
    <property type="term" value="C:periplasmic space"/>
    <property type="evidence" value="ECO:0007669"/>
    <property type="project" value="UniProtKB-SubCell"/>
</dbReference>
<dbReference type="GO" id="GO:0004252">
    <property type="term" value="F:serine-type endopeptidase activity"/>
    <property type="evidence" value="ECO:0007669"/>
    <property type="project" value="InterPro"/>
</dbReference>
<dbReference type="GO" id="GO:0006508">
    <property type="term" value="P:proteolysis"/>
    <property type="evidence" value="ECO:0007669"/>
    <property type="project" value="UniProtKB-KW"/>
</dbReference>
<dbReference type="CDD" id="cd10839">
    <property type="entry name" value="cpPDZ1_DegP-like"/>
    <property type="match status" value="1"/>
</dbReference>
<dbReference type="FunFam" id="2.30.42.10:FF:000037">
    <property type="entry name" value="Periplasmic serine endoprotease DegP-like"/>
    <property type="match status" value="1"/>
</dbReference>
<dbReference type="FunFam" id="2.40.10.120:FF:000007">
    <property type="entry name" value="Periplasmic serine endoprotease DegP-like"/>
    <property type="match status" value="1"/>
</dbReference>
<dbReference type="Gene3D" id="2.30.42.10">
    <property type="match status" value="2"/>
</dbReference>
<dbReference type="Gene3D" id="2.40.10.120">
    <property type="match status" value="1"/>
</dbReference>
<dbReference type="InterPro" id="IPR001478">
    <property type="entry name" value="PDZ"/>
</dbReference>
<dbReference type="InterPro" id="IPR036034">
    <property type="entry name" value="PDZ_sf"/>
</dbReference>
<dbReference type="InterPro" id="IPR011782">
    <property type="entry name" value="Pept_S1C_Do"/>
</dbReference>
<dbReference type="InterPro" id="IPR009003">
    <property type="entry name" value="Peptidase_S1_PA"/>
</dbReference>
<dbReference type="InterPro" id="IPR001940">
    <property type="entry name" value="Peptidase_S1C"/>
</dbReference>
<dbReference type="NCBIfam" id="TIGR02037">
    <property type="entry name" value="degP_htrA_DO"/>
    <property type="match status" value="1"/>
</dbReference>
<dbReference type="PANTHER" id="PTHR22939:SF130">
    <property type="entry name" value="PERIPLASMIC SERINE ENDOPROTEASE DEGP-LIKE-RELATED"/>
    <property type="match status" value="1"/>
</dbReference>
<dbReference type="PANTHER" id="PTHR22939">
    <property type="entry name" value="SERINE PROTEASE FAMILY S1C HTRA-RELATED"/>
    <property type="match status" value="1"/>
</dbReference>
<dbReference type="Pfam" id="PF13180">
    <property type="entry name" value="PDZ_2"/>
    <property type="match status" value="2"/>
</dbReference>
<dbReference type="Pfam" id="PF13365">
    <property type="entry name" value="Trypsin_2"/>
    <property type="match status" value="1"/>
</dbReference>
<dbReference type="PRINTS" id="PR00834">
    <property type="entry name" value="PROTEASES2C"/>
</dbReference>
<dbReference type="SMART" id="SM00228">
    <property type="entry name" value="PDZ"/>
    <property type="match status" value="2"/>
</dbReference>
<dbReference type="SUPFAM" id="SSF50156">
    <property type="entry name" value="PDZ domain-like"/>
    <property type="match status" value="2"/>
</dbReference>
<dbReference type="SUPFAM" id="SSF50494">
    <property type="entry name" value="Trypsin-like serine proteases"/>
    <property type="match status" value="1"/>
</dbReference>
<dbReference type="PROSITE" id="PS50106">
    <property type="entry name" value="PDZ"/>
    <property type="match status" value="2"/>
</dbReference>
<organism>
    <name type="scientific">Pseudomonas putida (strain W619)</name>
    <dbReference type="NCBI Taxonomy" id="390235"/>
    <lineage>
        <taxon>Bacteria</taxon>
        <taxon>Pseudomonadati</taxon>
        <taxon>Pseudomonadota</taxon>
        <taxon>Gammaproteobacteria</taxon>
        <taxon>Pseudomonadales</taxon>
        <taxon>Pseudomonadaceae</taxon>
        <taxon>Pseudomonas</taxon>
    </lineage>
</organism>
<feature type="signal peptide" evidence="2">
    <location>
        <begin position="1"/>
        <end position="27"/>
    </location>
</feature>
<feature type="chain" id="PRO_5000314745" description="Probable periplasmic serine endoprotease DegP-like">
    <location>
        <begin position="28"/>
        <end position="479"/>
    </location>
</feature>
<feature type="domain" description="PDZ 1" evidence="3">
    <location>
        <begin position="264"/>
        <end position="355"/>
    </location>
</feature>
<feature type="domain" description="PDZ 2" evidence="3">
    <location>
        <begin position="361"/>
        <end position="468"/>
    </location>
</feature>
<feature type="region of interest" description="Disordered" evidence="4">
    <location>
        <begin position="368"/>
        <end position="395"/>
    </location>
</feature>
<feature type="active site" description="Charge relay system" evidence="1">
    <location>
        <position position="117"/>
    </location>
</feature>
<feature type="active site" description="Charge relay system" evidence="2">
    <location>
        <position position="147"/>
    </location>
</feature>
<feature type="active site" description="Charge relay system" evidence="1">
    <location>
        <position position="220"/>
    </location>
</feature>
<feature type="binding site" evidence="1">
    <location>
        <begin position="218"/>
        <end position="220"/>
    </location>
    <ligand>
        <name>substrate</name>
    </ligand>
</feature>
<feature type="binding site" evidence="1">
    <location>
        <begin position="275"/>
        <end position="279"/>
    </location>
    <ligand>
        <name>substrate</name>
    </ligand>
</feature>
<accession>B1J4D7</accession>
<reference key="1">
    <citation type="submission" date="2008-02" db="EMBL/GenBank/DDBJ databases">
        <title>Complete sequence of Pseudomonas putida W619.</title>
        <authorList>
            <person name="Copeland A."/>
            <person name="Lucas S."/>
            <person name="Lapidus A."/>
            <person name="Barry K."/>
            <person name="Detter J.C."/>
            <person name="Glavina del Rio T."/>
            <person name="Dalin E."/>
            <person name="Tice H."/>
            <person name="Pitluck S."/>
            <person name="Chain P."/>
            <person name="Malfatti S."/>
            <person name="Shin M."/>
            <person name="Vergez L."/>
            <person name="Schmutz J."/>
            <person name="Larimer F."/>
            <person name="Land M."/>
            <person name="Hauser L."/>
            <person name="Kyrpides N."/>
            <person name="Kim E."/>
            <person name="Taghavi S."/>
            <person name="Vangronsveld D."/>
            <person name="van der Lelie D."/>
            <person name="Richardson P."/>
        </authorList>
    </citation>
    <scope>NUCLEOTIDE SEQUENCE [LARGE SCALE GENOMIC DNA]</scope>
    <source>
        <strain>W619</strain>
    </source>
</reference>